<feature type="chain" id="PRO_1000059691" description="Chaperone protein DnaK">
    <location>
        <begin position="1"/>
        <end position="596"/>
    </location>
</feature>
<feature type="modified residue" description="Phosphothreonine; by autocatalysis" evidence="1">
    <location>
        <position position="180"/>
    </location>
</feature>
<gene>
    <name evidence="1" type="primary">dnaK</name>
    <name type="ordered locus">Tmel_1128</name>
</gene>
<reference key="1">
    <citation type="submission" date="2007-05" db="EMBL/GenBank/DDBJ databases">
        <title>Complete sequence of Thermosipho melanesiensis BI429.</title>
        <authorList>
            <consortium name="US DOE Joint Genome Institute"/>
            <person name="Copeland A."/>
            <person name="Lucas S."/>
            <person name="Lapidus A."/>
            <person name="Barry K."/>
            <person name="Glavina del Rio T."/>
            <person name="Dalin E."/>
            <person name="Tice H."/>
            <person name="Pitluck S."/>
            <person name="Chertkov O."/>
            <person name="Brettin T."/>
            <person name="Bruce D."/>
            <person name="Detter J.C."/>
            <person name="Han C."/>
            <person name="Schmutz J."/>
            <person name="Larimer F."/>
            <person name="Land M."/>
            <person name="Hauser L."/>
            <person name="Kyrpides N."/>
            <person name="Mikhailova N."/>
            <person name="Nelson K."/>
            <person name="Gogarten J.P."/>
            <person name="Noll K."/>
            <person name="Richardson P."/>
        </authorList>
    </citation>
    <scope>NUCLEOTIDE SEQUENCE [LARGE SCALE GENOMIC DNA]</scope>
    <source>
        <strain>DSM 12029 / CIP 104789 / BI429</strain>
    </source>
</reference>
<accession>A6LM32</accession>
<name>DNAK_THEM4</name>
<organism>
    <name type="scientific">Thermosipho melanesiensis (strain DSM 12029 / CIP 104789 / BI429)</name>
    <dbReference type="NCBI Taxonomy" id="391009"/>
    <lineage>
        <taxon>Bacteria</taxon>
        <taxon>Thermotogati</taxon>
        <taxon>Thermotogota</taxon>
        <taxon>Thermotogae</taxon>
        <taxon>Thermotogales</taxon>
        <taxon>Fervidobacteriaceae</taxon>
        <taxon>Thermosipho</taxon>
    </lineage>
</organism>
<protein>
    <recommendedName>
        <fullName evidence="1">Chaperone protein DnaK</fullName>
    </recommendedName>
    <alternativeName>
        <fullName evidence="1">HSP70</fullName>
    </alternativeName>
    <alternativeName>
        <fullName evidence="1">Heat shock 70 kDa protein</fullName>
    </alternativeName>
    <alternativeName>
        <fullName evidence="1">Heat shock protein 70</fullName>
    </alternativeName>
</protein>
<proteinExistence type="inferred from homology"/>
<sequence length="596" mass="66239">MSSKKEYVVGIDLGTTNSVIAWMKPDSSVEVIPNAEGARTTPSIVAFSKSGEILVGEPAKRQLILNSDRTIKSIKRKMGTDYKVKIDDKEYSPQEISAFILKKLKKDAEEYLGGEIKRAVITCPAYFNDAQRQATKEAGIIAGFDVLRIINEPTAAALAYGLDRKGKEEKVLVYDLGGGTFDVSILEIGDGVIQVIATSGNNHLGGDDFDQRIIDWLAEEFKKQHGVDLKEDKQALQRLRDAAEKAKIELSSKLETDISLPYITATAEGPLHLEMRLTRSMFESLTRDLVEMTRKPIEQALSDAKLKPEDIDEIILVGGMTRVPMIQNFIKEIFGKEPNKRVNPDEAVAMGAAIQAAILAGEEGAQGKDIVLVDVTPLTLGIEVKGGLFEPIIPRNSTIPIKKSKVFTTAEDGQTEVEIRVFQGERPIAADNILLGSFRLVGIPPAPRGVPQIEVTFDIDSDGIVHVSAKDLGTGKEQTMVVSGRHKLSEEDINKIIEDAKKYEEQDKRRKEEVELKNKADDLAYYIDKSLKEYGDKIPQDEKQKLETLVNDLRDAINKNDIARIKMLFDELEREKTKIGEYIYKQNQGNQQAENQ</sequence>
<dbReference type="EMBL" id="CP000716">
    <property type="protein sequence ID" value="ABR30983.1"/>
    <property type="molecule type" value="Genomic_DNA"/>
</dbReference>
<dbReference type="RefSeq" id="WP_012057342.1">
    <property type="nucleotide sequence ID" value="NC_009616.1"/>
</dbReference>
<dbReference type="SMR" id="A6LM32"/>
<dbReference type="STRING" id="391009.Tmel_1128"/>
<dbReference type="KEGG" id="tme:Tmel_1128"/>
<dbReference type="eggNOG" id="COG0443">
    <property type="taxonomic scope" value="Bacteria"/>
</dbReference>
<dbReference type="HOGENOM" id="CLU_005965_2_4_0"/>
<dbReference type="OrthoDB" id="9766019at2"/>
<dbReference type="Proteomes" id="UP000001110">
    <property type="component" value="Chromosome"/>
</dbReference>
<dbReference type="GO" id="GO:0005524">
    <property type="term" value="F:ATP binding"/>
    <property type="evidence" value="ECO:0007669"/>
    <property type="project" value="UniProtKB-UniRule"/>
</dbReference>
<dbReference type="GO" id="GO:0140662">
    <property type="term" value="F:ATP-dependent protein folding chaperone"/>
    <property type="evidence" value="ECO:0007669"/>
    <property type="project" value="InterPro"/>
</dbReference>
<dbReference type="GO" id="GO:0051082">
    <property type="term" value="F:unfolded protein binding"/>
    <property type="evidence" value="ECO:0007669"/>
    <property type="project" value="InterPro"/>
</dbReference>
<dbReference type="CDD" id="cd10234">
    <property type="entry name" value="ASKHA_NBD_HSP70_DnaK-like"/>
    <property type="match status" value="1"/>
</dbReference>
<dbReference type="FunFam" id="2.60.34.10:FF:000014">
    <property type="entry name" value="Chaperone protein DnaK HSP70"/>
    <property type="match status" value="1"/>
</dbReference>
<dbReference type="FunFam" id="1.20.1270.10:FF:000001">
    <property type="entry name" value="Molecular chaperone DnaK"/>
    <property type="match status" value="1"/>
</dbReference>
<dbReference type="FunFam" id="3.30.420.40:FF:000071">
    <property type="entry name" value="Molecular chaperone DnaK"/>
    <property type="match status" value="1"/>
</dbReference>
<dbReference type="FunFam" id="3.90.640.10:FF:000003">
    <property type="entry name" value="Molecular chaperone DnaK"/>
    <property type="match status" value="1"/>
</dbReference>
<dbReference type="Gene3D" id="1.20.1270.10">
    <property type="match status" value="1"/>
</dbReference>
<dbReference type="Gene3D" id="3.30.30.30">
    <property type="match status" value="1"/>
</dbReference>
<dbReference type="Gene3D" id="3.30.420.40">
    <property type="match status" value="3"/>
</dbReference>
<dbReference type="Gene3D" id="3.90.640.10">
    <property type="entry name" value="Actin, Chain A, domain 4"/>
    <property type="match status" value="1"/>
</dbReference>
<dbReference type="Gene3D" id="2.60.34.10">
    <property type="entry name" value="Substrate Binding Domain Of DNAk, Chain A, domain 1"/>
    <property type="match status" value="1"/>
</dbReference>
<dbReference type="HAMAP" id="MF_00332">
    <property type="entry name" value="DnaK"/>
    <property type="match status" value="1"/>
</dbReference>
<dbReference type="InterPro" id="IPR043129">
    <property type="entry name" value="ATPase_NBD"/>
</dbReference>
<dbReference type="InterPro" id="IPR012725">
    <property type="entry name" value="Chaperone_DnaK"/>
</dbReference>
<dbReference type="InterPro" id="IPR018181">
    <property type="entry name" value="Heat_shock_70_CS"/>
</dbReference>
<dbReference type="InterPro" id="IPR029048">
    <property type="entry name" value="HSP70_C_sf"/>
</dbReference>
<dbReference type="InterPro" id="IPR029047">
    <property type="entry name" value="HSP70_peptide-bd_sf"/>
</dbReference>
<dbReference type="InterPro" id="IPR013126">
    <property type="entry name" value="Hsp_70_fam"/>
</dbReference>
<dbReference type="NCBIfam" id="NF001413">
    <property type="entry name" value="PRK00290.1"/>
    <property type="match status" value="1"/>
</dbReference>
<dbReference type="NCBIfam" id="TIGR02350">
    <property type="entry name" value="prok_dnaK"/>
    <property type="match status" value="1"/>
</dbReference>
<dbReference type="PANTHER" id="PTHR19375">
    <property type="entry name" value="HEAT SHOCK PROTEIN 70KDA"/>
    <property type="match status" value="1"/>
</dbReference>
<dbReference type="Pfam" id="PF00012">
    <property type="entry name" value="HSP70"/>
    <property type="match status" value="1"/>
</dbReference>
<dbReference type="PRINTS" id="PR00301">
    <property type="entry name" value="HEATSHOCK70"/>
</dbReference>
<dbReference type="SUPFAM" id="SSF53067">
    <property type="entry name" value="Actin-like ATPase domain"/>
    <property type="match status" value="2"/>
</dbReference>
<dbReference type="SUPFAM" id="SSF100934">
    <property type="entry name" value="Heat shock protein 70kD (HSP70), C-terminal subdomain"/>
    <property type="match status" value="1"/>
</dbReference>
<dbReference type="SUPFAM" id="SSF100920">
    <property type="entry name" value="Heat shock protein 70kD (HSP70), peptide-binding domain"/>
    <property type="match status" value="1"/>
</dbReference>
<dbReference type="PROSITE" id="PS00297">
    <property type="entry name" value="HSP70_1"/>
    <property type="match status" value="1"/>
</dbReference>
<dbReference type="PROSITE" id="PS00329">
    <property type="entry name" value="HSP70_2"/>
    <property type="match status" value="1"/>
</dbReference>
<keyword id="KW-0067">ATP-binding</keyword>
<keyword id="KW-0143">Chaperone</keyword>
<keyword id="KW-0547">Nucleotide-binding</keyword>
<keyword id="KW-0597">Phosphoprotein</keyword>
<keyword id="KW-0346">Stress response</keyword>
<evidence type="ECO:0000255" key="1">
    <source>
        <dbReference type="HAMAP-Rule" id="MF_00332"/>
    </source>
</evidence>
<comment type="function">
    <text evidence="1">Acts as a chaperone.</text>
</comment>
<comment type="induction">
    <text evidence="1">By stress conditions e.g. heat shock.</text>
</comment>
<comment type="similarity">
    <text evidence="1">Belongs to the heat shock protein 70 family.</text>
</comment>